<reference key="1">
    <citation type="journal article" date="1992" name="Plant J.">
        <title>The adenine nucleotide translocator of higher plants is synthesized as a large precursor that is processed upon import into mitochondria.</title>
        <authorList>
            <person name="Winning B.M."/>
            <person name="Sarah C.J."/>
            <person name="Purdue P.E."/>
            <person name="Day C.D."/>
            <person name="Leaver C.J."/>
        </authorList>
    </citation>
    <scope>NUCLEOTIDE SEQUENCE [MRNA]</scope>
    <source>
        <strain>cv. Desiree</strain>
        <tissue>Tuber</tissue>
    </source>
</reference>
<proteinExistence type="evidence at transcript level"/>
<keyword id="KW-0050">Antiport</keyword>
<keyword id="KW-0472">Membrane</keyword>
<keyword id="KW-0496">Mitochondrion</keyword>
<keyword id="KW-0999">Mitochondrion inner membrane</keyword>
<keyword id="KW-1185">Reference proteome</keyword>
<keyword id="KW-0677">Repeat</keyword>
<keyword id="KW-0809">Transit peptide</keyword>
<keyword id="KW-0812">Transmembrane</keyword>
<keyword id="KW-1133">Transmembrane helix</keyword>
<keyword id="KW-0813">Transport</keyword>
<gene>
    <name type="primary">ANT1</name>
    <name type="synonym">AAC</name>
</gene>
<evidence type="ECO:0000250" key="1">
    <source>
        <dbReference type="UniProtKB" id="G2QNH0"/>
    </source>
</evidence>
<evidence type="ECO:0000250" key="2">
    <source>
        <dbReference type="UniProtKB" id="P02722"/>
    </source>
</evidence>
<evidence type="ECO:0000250" key="3">
    <source>
        <dbReference type="UniProtKB" id="P12235"/>
    </source>
</evidence>
<evidence type="ECO:0000250" key="4">
    <source>
        <dbReference type="UniProtKB" id="P18239"/>
    </source>
</evidence>
<evidence type="ECO:0000250" key="5">
    <source>
        <dbReference type="UniProtKB" id="P31167"/>
    </source>
</evidence>
<evidence type="ECO:0000250" key="6">
    <source>
        <dbReference type="UniProtKB" id="P48962"/>
    </source>
</evidence>
<evidence type="ECO:0000255" key="7"/>
<evidence type="ECO:0000305" key="8"/>
<organism>
    <name type="scientific">Solanum tuberosum</name>
    <name type="common">Potato</name>
    <dbReference type="NCBI Taxonomy" id="4113"/>
    <lineage>
        <taxon>Eukaryota</taxon>
        <taxon>Viridiplantae</taxon>
        <taxon>Streptophyta</taxon>
        <taxon>Embryophyta</taxon>
        <taxon>Tracheophyta</taxon>
        <taxon>Spermatophyta</taxon>
        <taxon>Magnoliopsida</taxon>
        <taxon>eudicotyledons</taxon>
        <taxon>Gunneridae</taxon>
        <taxon>Pentapetalae</taxon>
        <taxon>asterids</taxon>
        <taxon>lamiids</taxon>
        <taxon>Solanales</taxon>
        <taxon>Solanaceae</taxon>
        <taxon>Solanoideae</taxon>
        <taxon>Solaneae</taxon>
        <taxon>Solanum</taxon>
    </lineage>
</organism>
<comment type="function">
    <text evidence="1 6">ADP:ATP antiporter that mediates import of ADP into the mitochondrial matrix for ATP synthesis, and export of ATP out to fuel the cell (By similarity). Cycles between the cytoplasmic-open state (c-state) and the matrix-open state (m-state): operates by the alternating access mechanism with a single substrate-binding site intermittently exposed to either the cytosolic (c-state) or matrix (m-state) side of the inner mitochondrial membrane (By similarity).</text>
</comment>
<comment type="catalytic activity">
    <reaction evidence="6">
        <text>ADP(in) + ATP(out) = ADP(out) + ATP(in)</text>
        <dbReference type="Rhea" id="RHEA:34999"/>
        <dbReference type="ChEBI" id="CHEBI:30616"/>
        <dbReference type="ChEBI" id="CHEBI:456216"/>
    </reaction>
    <physiologicalReaction direction="left-to-right" evidence="6">
        <dbReference type="Rhea" id="RHEA:35000"/>
    </physiologicalReaction>
</comment>
<comment type="activity regulation">
    <text evidence="1">The matrix-open state (m-state) is inhibited by the membrane-permeable bongkrekic acid (BKA). The cytoplasmic-open state (c-state) is inhibited by the membrane-impermeable toxic inhibitor carboxyatractyloside (CATR).</text>
</comment>
<comment type="subunit">
    <text evidence="1 2">Monomer.</text>
</comment>
<comment type="subcellular location">
    <subcellularLocation>
        <location evidence="5">Mitochondrion inner membrane</location>
        <topology evidence="7">Multi-pass membrane protein</topology>
    </subcellularLocation>
</comment>
<comment type="domain">
    <text evidence="4">The transmembrane helices are not perpendicular to the plane of the membrane, but cross the membrane at an angle. At least 2 of the odd-numbered transmembrane helices exhibit a sharp kink, due to the presence of a conserved proline residue.</text>
</comment>
<comment type="similarity">
    <text evidence="8">Belongs to the mitochondrial carrier (TC 2.A.29) family.</text>
</comment>
<protein>
    <recommendedName>
        <fullName>ADP,ATP carrier protein, mitochondrial</fullName>
    </recommendedName>
    <alternativeName>
        <fullName>ADP/ATP translocase</fullName>
    </alternativeName>
    <alternativeName>
        <fullName>Adenine nucleotide translocator</fullName>
        <shortName>ANT</shortName>
    </alternativeName>
</protein>
<accession>P27081</accession>
<dbReference type="EMBL" id="X57557">
    <property type="protein sequence ID" value="CAA40782.1"/>
    <property type="molecule type" value="mRNA"/>
</dbReference>
<dbReference type="PIR" id="S14874">
    <property type="entry name" value="S14874"/>
</dbReference>
<dbReference type="SMR" id="P27081"/>
<dbReference type="FunCoup" id="P27081">
    <property type="interactions" value="1713"/>
</dbReference>
<dbReference type="STRING" id="4113.P27081"/>
<dbReference type="PaxDb" id="4113-PGSC0003DMT400081472"/>
<dbReference type="eggNOG" id="KOG0749">
    <property type="taxonomic scope" value="Eukaryota"/>
</dbReference>
<dbReference type="InParanoid" id="P27081"/>
<dbReference type="Proteomes" id="UP000011115">
    <property type="component" value="Unassembled WGS sequence"/>
</dbReference>
<dbReference type="ExpressionAtlas" id="P27081">
    <property type="expression patterns" value="baseline and differential"/>
</dbReference>
<dbReference type="GO" id="GO:0005743">
    <property type="term" value="C:mitochondrial inner membrane"/>
    <property type="evidence" value="ECO:0007669"/>
    <property type="project" value="UniProtKB-SubCell"/>
</dbReference>
<dbReference type="GO" id="GO:0005471">
    <property type="term" value="F:ATP:ADP antiporter activity"/>
    <property type="evidence" value="ECO:0000318"/>
    <property type="project" value="GO_Central"/>
</dbReference>
<dbReference type="GO" id="GO:0140021">
    <property type="term" value="P:mitochondrial ADP transmembrane transport"/>
    <property type="evidence" value="ECO:0007669"/>
    <property type="project" value="InterPro"/>
</dbReference>
<dbReference type="GO" id="GO:1990544">
    <property type="term" value="P:mitochondrial ATP transmembrane transport"/>
    <property type="evidence" value="ECO:0007669"/>
    <property type="project" value="InterPro"/>
</dbReference>
<dbReference type="FunFam" id="1.50.40.10:FF:000001">
    <property type="entry name" value="ADP,ATP carrier protein, mitochondrial"/>
    <property type="match status" value="1"/>
</dbReference>
<dbReference type="Gene3D" id="1.50.40.10">
    <property type="entry name" value="Mitochondrial carrier domain"/>
    <property type="match status" value="1"/>
</dbReference>
<dbReference type="InterPro" id="IPR002113">
    <property type="entry name" value="ADT_euk_type"/>
</dbReference>
<dbReference type="InterPro" id="IPR002067">
    <property type="entry name" value="Mit_carrier"/>
</dbReference>
<dbReference type="InterPro" id="IPR018108">
    <property type="entry name" value="Mitochondrial_sb/sol_carrier"/>
</dbReference>
<dbReference type="InterPro" id="IPR023395">
    <property type="entry name" value="Mt_carrier_dom_sf"/>
</dbReference>
<dbReference type="PANTHER" id="PTHR45635">
    <property type="entry name" value="ADP,ATP CARRIER PROTEIN 1-RELATED-RELATED"/>
    <property type="match status" value="1"/>
</dbReference>
<dbReference type="PANTHER" id="PTHR45635:SF37">
    <property type="entry name" value="ADP_ATP TRANSLOCASE"/>
    <property type="match status" value="1"/>
</dbReference>
<dbReference type="Pfam" id="PF00153">
    <property type="entry name" value="Mito_carr"/>
    <property type="match status" value="3"/>
</dbReference>
<dbReference type="PRINTS" id="PR00927">
    <property type="entry name" value="ADPTRNSLCASE"/>
</dbReference>
<dbReference type="PRINTS" id="PR00926">
    <property type="entry name" value="MITOCARRIER"/>
</dbReference>
<dbReference type="SUPFAM" id="SSF103506">
    <property type="entry name" value="Mitochondrial carrier"/>
    <property type="match status" value="1"/>
</dbReference>
<dbReference type="PROSITE" id="PS50920">
    <property type="entry name" value="SOLCAR"/>
    <property type="match status" value="3"/>
</dbReference>
<feature type="transit peptide" description="Mitochondrion" evidence="7">
    <location>
        <begin position="1" status="less than"/>
        <end position="76"/>
    </location>
</feature>
<feature type="chain" id="PRO_0000019252" description="ADP,ATP carrier protein, mitochondrial">
    <location>
        <begin position="77"/>
        <end position="386"/>
    </location>
</feature>
<feature type="transmembrane region" description="Helical; Name=1" evidence="4">
    <location>
        <begin position="85"/>
        <end position="112"/>
    </location>
</feature>
<feature type="transmembrane region" description="Helical; Name=2" evidence="4">
    <location>
        <begin position="153"/>
        <end position="177"/>
    </location>
</feature>
<feature type="transmembrane region" description="Helical; Name=3" evidence="4">
    <location>
        <begin position="186"/>
        <end position="206"/>
    </location>
</feature>
<feature type="transmembrane region" description="Helical; Name=4" evidence="4">
    <location>
        <begin position="257"/>
        <end position="278"/>
    </location>
</feature>
<feature type="transmembrane region" description="Helical; Name=5" evidence="4">
    <location>
        <begin position="292"/>
        <end position="312"/>
    </location>
</feature>
<feature type="transmembrane region" description="Helical; Name=6" evidence="4">
    <location>
        <begin position="352"/>
        <end position="372"/>
    </location>
</feature>
<feature type="repeat" description="Solcar 1">
    <location>
        <begin position="83"/>
        <end position="176"/>
    </location>
</feature>
<feature type="repeat" description="Solcar 2">
    <location>
        <begin position="188"/>
        <end position="281"/>
    </location>
</feature>
<feature type="repeat" description="Solcar 3">
    <location>
        <begin position="289"/>
        <end position="375"/>
    </location>
</feature>
<feature type="region of interest" description="Important for transport activity" evidence="3">
    <location>
        <begin position="316"/>
        <end position="321"/>
    </location>
</feature>
<feature type="short sequence motif" description="Nucleotide carrier signature motif" evidence="2">
    <location>
        <begin position="316"/>
        <end position="321"/>
    </location>
</feature>
<feature type="binding site" evidence="2">
    <location>
        <position position="158"/>
    </location>
    <ligand>
        <name>ADP</name>
        <dbReference type="ChEBI" id="CHEBI:456216"/>
    </ligand>
</feature>
<feature type="binding site" evidence="2">
    <location>
        <position position="170"/>
    </location>
    <ligand>
        <name>ADP</name>
        <dbReference type="ChEBI" id="CHEBI:456216"/>
    </ligand>
</feature>
<feature type="binding site" evidence="2">
    <location>
        <position position="316"/>
    </location>
    <ligand>
        <name>ADP</name>
        <dbReference type="ChEBI" id="CHEBI:456216"/>
    </ligand>
</feature>
<feature type="non-terminal residue">
    <location>
        <position position="1"/>
    </location>
</feature>
<sequence length="386" mass="41829">ADNQHPTVYQKVASQMHLSSSLSQDVHARYGGIQRPALSQRRFPYGNYSNAGLQTCQATQDLSLIAANASPVFVQAPQEKGLAAFATDFLMGGVSAAVSKTAAAPIERVKLLIQNQDEMIKAGRLSEPYKGIGDCFSRTIKDEGFAALWRGNTANVIRYFPTQALNFAFKDYFKRLFNFKKDRDGYWKWFAGNLASGGGAGASSLLFVYSLDYARTRLANDAKAAKKGGGGRQFDGLVDVYRKTLKSDGVAGLYRGFNISCVGIIVYRGLYFGMYDSLKPVLLTGKMEDSFFASFALGWLITNGAGLASYPIDTVRRRMMMTSGEAVKYKSSFDAFNQILKNEGPKSLFKGAGANVLRAVAGAGVLAGYDKLQVIVFGKKYGSGGG</sequence>
<name>ADT2_SOLTU</name>